<evidence type="ECO:0000255" key="1">
    <source>
        <dbReference type="HAMAP-Rule" id="MF_01574"/>
    </source>
</evidence>
<reference key="1">
    <citation type="journal article" date="2002" name="Mol. Microbiol.">
        <title>Genome sequence of Streptococcus agalactiae, a pathogen causing invasive neonatal disease.</title>
        <authorList>
            <person name="Glaser P."/>
            <person name="Rusniok C."/>
            <person name="Buchrieser C."/>
            <person name="Chevalier F."/>
            <person name="Frangeul L."/>
            <person name="Msadek T."/>
            <person name="Zouine M."/>
            <person name="Couve E."/>
            <person name="Lalioui L."/>
            <person name="Poyart C."/>
            <person name="Trieu-Cuot P."/>
            <person name="Kunst F."/>
        </authorList>
    </citation>
    <scope>NUCLEOTIDE SEQUENCE [LARGE SCALE GENOMIC DNA]</scope>
    <source>
        <strain>NEM316</strain>
    </source>
</reference>
<accession>Q8E4S2</accession>
<protein>
    <recommendedName>
        <fullName evidence="1">6-phospho-beta-galactosidase</fullName>
        <ecNumber evidence="1">3.2.1.85</ecNumber>
    </recommendedName>
    <alternativeName>
        <fullName evidence="1">Beta-D-phosphogalactoside galactohydrolase</fullName>
        <shortName evidence="1">PGALase</shortName>
    </alternativeName>
    <alternativeName>
        <fullName evidence="1">P-beta-Gal</fullName>
        <shortName evidence="1">PBG</shortName>
    </alternativeName>
</protein>
<proteinExistence type="inferred from homology"/>
<dbReference type="EC" id="3.2.1.85" evidence="1"/>
<dbReference type="EMBL" id="AL766850">
    <property type="protein sequence ID" value="CAD46988.1"/>
    <property type="molecule type" value="Genomic_DNA"/>
</dbReference>
<dbReference type="RefSeq" id="WP_000169238.1">
    <property type="nucleotide sequence ID" value="NC_004368.1"/>
</dbReference>
<dbReference type="SMR" id="Q8E4S2"/>
<dbReference type="CAZy" id="GH1">
    <property type="family name" value="Glycoside Hydrolase Family 1"/>
</dbReference>
<dbReference type="KEGG" id="san:gbs1329"/>
<dbReference type="eggNOG" id="COG2723">
    <property type="taxonomic scope" value="Bacteria"/>
</dbReference>
<dbReference type="HOGENOM" id="CLU_001859_1_3_9"/>
<dbReference type="UniPathway" id="UPA00542">
    <property type="reaction ID" value="UER00605"/>
</dbReference>
<dbReference type="Proteomes" id="UP000000823">
    <property type="component" value="Chromosome"/>
</dbReference>
<dbReference type="GO" id="GO:0005829">
    <property type="term" value="C:cytosol"/>
    <property type="evidence" value="ECO:0007669"/>
    <property type="project" value="TreeGrafter"/>
</dbReference>
<dbReference type="GO" id="GO:0033920">
    <property type="term" value="F:6-phospho-beta-galactosidase activity"/>
    <property type="evidence" value="ECO:0007669"/>
    <property type="project" value="UniProtKB-UniRule"/>
</dbReference>
<dbReference type="GO" id="GO:0008422">
    <property type="term" value="F:beta-glucosidase activity"/>
    <property type="evidence" value="ECO:0007669"/>
    <property type="project" value="TreeGrafter"/>
</dbReference>
<dbReference type="GO" id="GO:0019512">
    <property type="term" value="P:lactose catabolic process via tagatose-6-phosphate"/>
    <property type="evidence" value="ECO:0007669"/>
    <property type="project" value="InterPro"/>
</dbReference>
<dbReference type="FunFam" id="3.20.20.80:FF:000004">
    <property type="entry name" value="Beta-glucosidase 6-phospho-beta-glucosidase"/>
    <property type="match status" value="1"/>
</dbReference>
<dbReference type="Gene3D" id="3.20.20.80">
    <property type="entry name" value="Glycosidases"/>
    <property type="match status" value="1"/>
</dbReference>
<dbReference type="HAMAP" id="MF_01574">
    <property type="entry name" value="LacG"/>
    <property type="match status" value="1"/>
</dbReference>
<dbReference type="InterPro" id="IPR005928">
    <property type="entry name" value="6P-beta-galactosidase"/>
</dbReference>
<dbReference type="InterPro" id="IPR001360">
    <property type="entry name" value="Glyco_hydro_1"/>
</dbReference>
<dbReference type="InterPro" id="IPR018120">
    <property type="entry name" value="Glyco_hydro_1_AS"/>
</dbReference>
<dbReference type="InterPro" id="IPR033132">
    <property type="entry name" value="Glyco_hydro_1_N_CS"/>
</dbReference>
<dbReference type="InterPro" id="IPR017853">
    <property type="entry name" value="Glycoside_hydrolase_SF"/>
</dbReference>
<dbReference type="NCBIfam" id="TIGR01233">
    <property type="entry name" value="lacG"/>
    <property type="match status" value="1"/>
</dbReference>
<dbReference type="NCBIfam" id="NF010036">
    <property type="entry name" value="PRK13511.1"/>
    <property type="match status" value="1"/>
</dbReference>
<dbReference type="PANTHER" id="PTHR10353">
    <property type="entry name" value="GLYCOSYL HYDROLASE"/>
    <property type="match status" value="1"/>
</dbReference>
<dbReference type="PANTHER" id="PTHR10353:SF36">
    <property type="entry name" value="LP05116P"/>
    <property type="match status" value="1"/>
</dbReference>
<dbReference type="Pfam" id="PF00232">
    <property type="entry name" value="Glyco_hydro_1"/>
    <property type="match status" value="1"/>
</dbReference>
<dbReference type="PRINTS" id="PR00131">
    <property type="entry name" value="GLHYDRLASE1"/>
</dbReference>
<dbReference type="SUPFAM" id="SSF51445">
    <property type="entry name" value="(Trans)glycosidases"/>
    <property type="match status" value="1"/>
</dbReference>
<dbReference type="PROSITE" id="PS00572">
    <property type="entry name" value="GLYCOSYL_HYDROL_F1_1"/>
    <property type="match status" value="1"/>
</dbReference>
<dbReference type="PROSITE" id="PS00653">
    <property type="entry name" value="GLYCOSYL_HYDROL_F1_2"/>
    <property type="match status" value="1"/>
</dbReference>
<keyword id="KW-0326">Glycosidase</keyword>
<keyword id="KW-0378">Hydrolase</keyword>
<feature type="chain" id="PRO_0000260728" description="6-phospho-beta-galactosidase">
    <location>
        <begin position="1"/>
        <end position="468"/>
    </location>
</feature>
<feature type="active site" description="Proton donor" evidence="1">
    <location>
        <position position="160"/>
    </location>
</feature>
<feature type="active site" description="Nucleophile" evidence="1">
    <location>
        <position position="375"/>
    </location>
</feature>
<feature type="binding site" evidence="1">
    <location>
        <position position="19"/>
    </location>
    <ligand>
        <name>D-galactose 6-phosphate</name>
        <dbReference type="ChEBI" id="CHEBI:91004"/>
    </ligand>
</feature>
<feature type="binding site" evidence="1">
    <location>
        <position position="116"/>
    </location>
    <ligand>
        <name>D-galactose 6-phosphate</name>
        <dbReference type="ChEBI" id="CHEBI:91004"/>
    </ligand>
</feature>
<feature type="binding site" evidence="1">
    <location>
        <position position="159"/>
    </location>
    <ligand>
        <name>D-galactose 6-phosphate</name>
        <dbReference type="ChEBI" id="CHEBI:91004"/>
    </ligand>
</feature>
<feature type="binding site" evidence="1">
    <location>
        <position position="160"/>
    </location>
    <ligand>
        <name>D-galactose 6-phosphate</name>
        <dbReference type="ChEBI" id="CHEBI:91004"/>
    </ligand>
</feature>
<feature type="binding site" evidence="1">
    <location>
        <position position="297"/>
    </location>
    <ligand>
        <name>D-galactose 6-phosphate</name>
        <dbReference type="ChEBI" id="CHEBI:91004"/>
    </ligand>
</feature>
<feature type="binding site" evidence="1">
    <location>
        <position position="428"/>
    </location>
    <ligand>
        <name>D-galactose 6-phosphate</name>
        <dbReference type="ChEBI" id="CHEBI:91004"/>
    </ligand>
</feature>
<feature type="binding site" evidence="1">
    <location>
        <position position="429"/>
    </location>
    <ligand>
        <name>D-galactose 6-phosphate</name>
        <dbReference type="ChEBI" id="CHEBI:91004"/>
    </ligand>
</feature>
<feature type="binding site" evidence="1">
    <location>
        <position position="435"/>
    </location>
    <ligand>
        <name>D-galactose 6-phosphate</name>
        <dbReference type="ChEBI" id="CHEBI:91004"/>
    </ligand>
</feature>
<feature type="binding site" evidence="1">
    <location>
        <position position="437"/>
    </location>
    <ligand>
        <name>D-galactose 6-phosphate</name>
        <dbReference type="ChEBI" id="CHEBI:91004"/>
    </ligand>
</feature>
<gene>
    <name evidence="1" type="primary">lacG</name>
    <name type="ordered locus">gbs1329</name>
</gene>
<sequence length="468" mass="54066">MTKTLPKDFIFGGATAAYQAEGATHTDGKGPVAWDKYLEDNYWYTAEPASDFYHKYPVDLALAEEYGVNGIRISIAWSRIFPTGYGEVNLKGVEFYHKLFEECHKRHVEPFVTLHHFDTPEALHSNGDFLNRDNIEHFVNYAAFCFEEFPEVNYWTTFNEIGPIGDGQYLVGKFPPGIQYDLAKVFQSHHNMMVSHARAVKLYKDKGYKGEIGVVHALPTKYPLDPENSADVRAAELEDIIHNKFILDATYLGYYSEMTMAGVKHILKENGGELDLREEDFQALEAAKDLNDFLGINYYMSDWMQAFDGETEIIHNGKGEKGSSKYQIKGVGRRVAPDYVPKTDWDWIIYPQGLYDQIMRVKNDYPNYKKIYITENGLGYKDEFVDNTVYDDGRIDYVKQHLEVLSEAISDGANVKGYFIWSLMDVFSWSNGYEKRYGLFYVDFETQERYPKKSAHWYKQVAKTQIIE</sequence>
<comment type="catalytic activity">
    <reaction evidence="1">
        <text>a 6-phospho-beta-D-galactoside + H2O = D-galactose 6-phosphate + an alcohol</text>
        <dbReference type="Rhea" id="RHEA:24568"/>
        <dbReference type="ChEBI" id="CHEBI:15377"/>
        <dbReference type="ChEBI" id="CHEBI:30879"/>
        <dbReference type="ChEBI" id="CHEBI:58534"/>
        <dbReference type="ChEBI" id="CHEBI:91004"/>
        <dbReference type="EC" id="3.2.1.85"/>
    </reaction>
</comment>
<comment type="pathway">
    <text evidence="1">Carbohydrate metabolism; lactose degradation; D-galactose 6-phosphate and beta-D-glucose from lactose 6-phosphate: step 1/1.</text>
</comment>
<comment type="similarity">
    <text evidence="1">Belongs to the glycosyl hydrolase 1 family.</text>
</comment>
<name>LACG_STRA3</name>
<organism>
    <name type="scientific">Streptococcus agalactiae serotype III (strain NEM316)</name>
    <dbReference type="NCBI Taxonomy" id="211110"/>
    <lineage>
        <taxon>Bacteria</taxon>
        <taxon>Bacillati</taxon>
        <taxon>Bacillota</taxon>
        <taxon>Bacilli</taxon>
        <taxon>Lactobacillales</taxon>
        <taxon>Streptococcaceae</taxon>
        <taxon>Streptococcus</taxon>
    </lineage>
</organism>